<organismHost>
    <name type="scientific">Bos taurus</name>
    <name type="common">Bovine</name>
    <dbReference type="NCBI Taxonomy" id="9913"/>
</organismHost>
<protein>
    <recommendedName>
        <fullName>Uncharacterized 7.5 kDa protein</fullName>
    </recommendedName>
</protein>
<accession>P68629</accession>
<accession>P20528</accession>
<proteinExistence type="predicted"/>
<sequence>MSVISNPSKYKQSNTNKHMLEFLYSFFLCIPKLPNGSGTLCSSTRTISESNTIDVAFLNAFGMYSLR</sequence>
<keyword id="KW-1185">Reference proteome</keyword>
<organism>
    <name type="scientific">Vaccinia virus (strain Western Reserve)</name>
    <name type="common">VACV</name>
    <name type="synonym">Vaccinia virus (strain WR)</name>
    <dbReference type="NCBI Taxonomy" id="10254"/>
    <lineage>
        <taxon>Viruses</taxon>
        <taxon>Varidnaviria</taxon>
        <taxon>Bamfordvirae</taxon>
        <taxon>Nucleocytoviricota</taxon>
        <taxon>Pokkesviricetes</taxon>
        <taxon>Chitovirales</taxon>
        <taxon>Poxviridae</taxon>
        <taxon>Chordopoxvirinae</taxon>
        <taxon>Orthopoxvirus</taxon>
        <taxon>Vaccinia virus</taxon>
    </lineage>
</organism>
<name>YVAS_VACCW</name>
<gene>
    <name type="ORF">SALFC</name>
</gene>
<reference key="1">
    <citation type="journal article" date="1991" name="J. Gen. Virol.">
        <title>Nucleotide sequence of 42 kbp of vaccinia virus strain WR from near the right inverted terminal repeat.</title>
        <authorList>
            <person name="Smith G.L."/>
            <person name="Chan Y.S."/>
            <person name="Howard S.T."/>
        </authorList>
    </citation>
    <scope>NUCLEOTIDE SEQUENCE [GENOMIC DNA]</scope>
</reference>
<feature type="chain" id="PRO_0000099663" description="Uncharacterized 7.5 kDa protein">
    <location>
        <begin position="1"/>
        <end position="67"/>
    </location>
</feature>
<dbReference type="EMBL" id="AY243312">
    <property type="status" value="NOT_ANNOTATED_CDS"/>
    <property type="molecule type" value="Genomic_DNA"/>
</dbReference>
<dbReference type="PIR" id="F42525">
    <property type="entry name" value="F42525"/>
</dbReference>
<dbReference type="Proteomes" id="UP000000344">
    <property type="component" value="Genome"/>
</dbReference>